<name>RL27_STRPI</name>
<accession>B1IBP4</accession>
<feature type="propeptide" id="PRO_0000459956" evidence="1">
    <location>
        <begin position="1"/>
        <end position="12"/>
    </location>
</feature>
<feature type="chain" id="PRO_1000128815" description="Large ribosomal subunit protein bL27">
    <location>
        <begin position="13"/>
        <end position="97"/>
    </location>
</feature>
<feature type="region of interest" description="Disordered" evidence="3">
    <location>
        <begin position="13"/>
        <end position="37"/>
    </location>
</feature>
<reference key="1">
    <citation type="journal article" date="2010" name="Genome Biol.">
        <title>Structure and dynamics of the pan-genome of Streptococcus pneumoniae and closely related species.</title>
        <authorList>
            <person name="Donati C."/>
            <person name="Hiller N.L."/>
            <person name="Tettelin H."/>
            <person name="Muzzi A."/>
            <person name="Croucher N.J."/>
            <person name="Angiuoli S.V."/>
            <person name="Oggioni M."/>
            <person name="Dunning Hotopp J.C."/>
            <person name="Hu F.Z."/>
            <person name="Riley D.R."/>
            <person name="Covacci A."/>
            <person name="Mitchell T.J."/>
            <person name="Bentley S.D."/>
            <person name="Kilian M."/>
            <person name="Ehrlich G.D."/>
            <person name="Rappuoli R."/>
            <person name="Moxon E.R."/>
            <person name="Masignani V."/>
        </authorList>
    </citation>
    <scope>NUCLEOTIDE SEQUENCE [LARGE SCALE GENOMIC DNA]</scope>
    <source>
        <strain>Hungary19A-6</strain>
    </source>
</reference>
<dbReference type="EMBL" id="CP000936">
    <property type="protein sequence ID" value="ACA35722.1"/>
    <property type="molecule type" value="Genomic_DNA"/>
</dbReference>
<dbReference type="RefSeq" id="WP_000916509.1">
    <property type="nucleotide sequence ID" value="NC_010380.1"/>
</dbReference>
<dbReference type="SMR" id="B1IBP4"/>
<dbReference type="GeneID" id="93739803"/>
<dbReference type="KEGG" id="spv:SPH_1199"/>
<dbReference type="HOGENOM" id="CLU_095424_4_0_9"/>
<dbReference type="Proteomes" id="UP000002163">
    <property type="component" value="Chromosome"/>
</dbReference>
<dbReference type="GO" id="GO:0022625">
    <property type="term" value="C:cytosolic large ribosomal subunit"/>
    <property type="evidence" value="ECO:0007669"/>
    <property type="project" value="TreeGrafter"/>
</dbReference>
<dbReference type="GO" id="GO:0003735">
    <property type="term" value="F:structural constituent of ribosome"/>
    <property type="evidence" value="ECO:0007669"/>
    <property type="project" value="InterPro"/>
</dbReference>
<dbReference type="GO" id="GO:0006412">
    <property type="term" value="P:translation"/>
    <property type="evidence" value="ECO:0007669"/>
    <property type="project" value="UniProtKB-UniRule"/>
</dbReference>
<dbReference type="FunFam" id="2.40.50.100:FF:000004">
    <property type="entry name" value="50S ribosomal protein L27"/>
    <property type="match status" value="1"/>
</dbReference>
<dbReference type="Gene3D" id="2.40.50.100">
    <property type="match status" value="1"/>
</dbReference>
<dbReference type="HAMAP" id="MF_00539">
    <property type="entry name" value="Ribosomal_bL27"/>
    <property type="match status" value="1"/>
</dbReference>
<dbReference type="InterPro" id="IPR001684">
    <property type="entry name" value="Ribosomal_bL27"/>
</dbReference>
<dbReference type="InterPro" id="IPR018261">
    <property type="entry name" value="Ribosomal_bL27_CS"/>
</dbReference>
<dbReference type="NCBIfam" id="TIGR00062">
    <property type="entry name" value="L27"/>
    <property type="match status" value="1"/>
</dbReference>
<dbReference type="PANTHER" id="PTHR15893:SF0">
    <property type="entry name" value="LARGE RIBOSOMAL SUBUNIT PROTEIN BL27M"/>
    <property type="match status" value="1"/>
</dbReference>
<dbReference type="PANTHER" id="PTHR15893">
    <property type="entry name" value="RIBOSOMAL PROTEIN L27"/>
    <property type="match status" value="1"/>
</dbReference>
<dbReference type="Pfam" id="PF01016">
    <property type="entry name" value="Ribosomal_L27"/>
    <property type="match status" value="1"/>
</dbReference>
<dbReference type="PRINTS" id="PR00063">
    <property type="entry name" value="RIBOSOMALL27"/>
</dbReference>
<dbReference type="SUPFAM" id="SSF110324">
    <property type="entry name" value="Ribosomal L27 protein-like"/>
    <property type="match status" value="1"/>
</dbReference>
<dbReference type="PROSITE" id="PS00831">
    <property type="entry name" value="RIBOSOMAL_L27"/>
    <property type="match status" value="1"/>
</dbReference>
<evidence type="ECO:0000250" key="1">
    <source>
        <dbReference type="UniProtKB" id="Q2FXT0"/>
    </source>
</evidence>
<evidence type="ECO:0000255" key="2">
    <source>
        <dbReference type="HAMAP-Rule" id="MF_00539"/>
    </source>
</evidence>
<evidence type="ECO:0000256" key="3">
    <source>
        <dbReference type="SAM" id="MobiDB-lite"/>
    </source>
</evidence>
<evidence type="ECO:0000305" key="4"/>
<comment type="PTM">
    <text evidence="1">The N-terminus is cleaved by ribosomal processing cysteine protease Prp.</text>
</comment>
<comment type="similarity">
    <text evidence="2">Belongs to the bacterial ribosomal protein bL27 family.</text>
</comment>
<sequence>MLKMTLNNLQLFAHKKGGGSTSNGRDSQAKRLGAKAADGQTVTGGSILYRQRGTHIYPGVNVGRGGDDTLFAKVEGVVRFERKGRDKKQVSVYPIAK</sequence>
<gene>
    <name evidence="2" type="primary">rpmA</name>
    <name type="ordered locus">SPH_1199</name>
</gene>
<organism>
    <name type="scientific">Streptococcus pneumoniae (strain Hungary19A-6)</name>
    <dbReference type="NCBI Taxonomy" id="487214"/>
    <lineage>
        <taxon>Bacteria</taxon>
        <taxon>Bacillati</taxon>
        <taxon>Bacillota</taxon>
        <taxon>Bacilli</taxon>
        <taxon>Lactobacillales</taxon>
        <taxon>Streptococcaceae</taxon>
        <taxon>Streptococcus</taxon>
    </lineage>
</organism>
<proteinExistence type="inferred from homology"/>
<protein>
    <recommendedName>
        <fullName evidence="2">Large ribosomal subunit protein bL27</fullName>
    </recommendedName>
    <alternativeName>
        <fullName evidence="4">50S ribosomal protein L27</fullName>
    </alternativeName>
</protein>
<keyword id="KW-0687">Ribonucleoprotein</keyword>
<keyword id="KW-0689">Ribosomal protein</keyword>